<accession>Q9HLB9</accession>
<feature type="chain" id="PRO_0000187653" description="Uroporphyrinogen decarboxylase">
    <location>
        <begin position="1"/>
        <end position="333"/>
    </location>
</feature>
<feature type="binding site" evidence="1">
    <location>
        <begin position="22"/>
        <end position="26"/>
    </location>
    <ligand>
        <name>substrate</name>
    </ligand>
</feature>
<feature type="binding site" evidence="1">
    <location>
        <position position="71"/>
    </location>
    <ligand>
        <name>substrate</name>
    </ligand>
</feature>
<feature type="binding site" evidence="1">
    <location>
        <position position="145"/>
    </location>
    <ligand>
        <name>substrate</name>
    </ligand>
</feature>
<feature type="binding site" evidence="1">
    <location>
        <position position="200"/>
    </location>
    <ligand>
        <name>substrate</name>
    </ligand>
</feature>
<feature type="binding site" evidence="1">
    <location>
        <position position="310"/>
    </location>
    <ligand>
        <name>substrate</name>
    </ligand>
</feature>
<feature type="site" description="Transition state stabilizer" evidence="1">
    <location>
        <position position="71"/>
    </location>
</feature>
<reference key="1">
    <citation type="journal article" date="2000" name="Nature">
        <title>The genome sequence of the thermoacidophilic scavenger Thermoplasma acidophilum.</title>
        <authorList>
            <person name="Ruepp A."/>
            <person name="Graml W."/>
            <person name="Santos-Martinez M.-L."/>
            <person name="Koretke K.K."/>
            <person name="Volker C."/>
            <person name="Mewes H.-W."/>
            <person name="Frishman D."/>
            <person name="Stocker S."/>
            <person name="Lupas A.N."/>
            <person name="Baumeister W."/>
        </authorList>
    </citation>
    <scope>NUCLEOTIDE SEQUENCE [LARGE SCALE GENOMIC DNA]</scope>
    <source>
        <strain>ATCC 25905 / DSM 1728 / JCM 9062 / NBRC 15155 / AMRC-C165</strain>
    </source>
</reference>
<name>DCUP_THEAC</name>
<organism>
    <name type="scientific">Thermoplasma acidophilum (strain ATCC 25905 / DSM 1728 / JCM 9062 / NBRC 15155 / AMRC-C165)</name>
    <dbReference type="NCBI Taxonomy" id="273075"/>
    <lineage>
        <taxon>Archaea</taxon>
        <taxon>Methanobacteriati</taxon>
        <taxon>Thermoplasmatota</taxon>
        <taxon>Thermoplasmata</taxon>
        <taxon>Thermoplasmatales</taxon>
        <taxon>Thermoplasmataceae</taxon>
        <taxon>Thermoplasma</taxon>
    </lineage>
</organism>
<comment type="function">
    <text evidence="1">Catalyzes the decarboxylation of four acetate groups of uroporphyrinogen-III to yield coproporphyrinogen-III.</text>
</comment>
<comment type="catalytic activity">
    <reaction evidence="1">
        <text>uroporphyrinogen III + 4 H(+) = coproporphyrinogen III + 4 CO2</text>
        <dbReference type="Rhea" id="RHEA:19865"/>
        <dbReference type="ChEBI" id="CHEBI:15378"/>
        <dbReference type="ChEBI" id="CHEBI:16526"/>
        <dbReference type="ChEBI" id="CHEBI:57308"/>
        <dbReference type="ChEBI" id="CHEBI:57309"/>
        <dbReference type="EC" id="4.1.1.37"/>
    </reaction>
</comment>
<comment type="pathway">
    <text evidence="1">Porphyrin-containing compound metabolism; protoporphyrin-IX biosynthesis; coproporphyrinogen-III from 5-aminolevulinate: step 4/4.</text>
</comment>
<comment type="subunit">
    <text evidence="1">Homodimer.</text>
</comment>
<comment type="subcellular location">
    <subcellularLocation>
        <location evidence="1">Cytoplasm</location>
    </subcellularLocation>
</comment>
<comment type="similarity">
    <text evidence="1">Belongs to the uroporphyrinogen decarboxylase family.</text>
</comment>
<gene>
    <name evidence="1" type="primary">hemE</name>
    <name type="ordered locus">Ta0310</name>
</gene>
<evidence type="ECO:0000255" key="1">
    <source>
        <dbReference type="HAMAP-Rule" id="MF_00218"/>
    </source>
</evidence>
<proteinExistence type="inferred from homology"/>
<protein>
    <recommendedName>
        <fullName evidence="1">Uroporphyrinogen decarboxylase</fullName>
        <shortName evidence="1">UPD</shortName>
        <shortName evidence="1">URO-D</shortName>
        <ecNumber evidence="1">4.1.1.37</ecNumber>
    </recommendedName>
</protein>
<keyword id="KW-0963">Cytoplasm</keyword>
<keyword id="KW-0210">Decarboxylase</keyword>
<keyword id="KW-0456">Lyase</keyword>
<keyword id="KW-0627">Porphyrin biosynthesis</keyword>
<keyword id="KW-1185">Reference proteome</keyword>
<sequence length="333" mass="37785">MDPFRKAIKGYDHDRIPVWFMRQAGRYLPSYMKYRQRMGIEEMMSSPDVIVDVTHDPVDRIGVDAAIIFADITTPLSGMGLRVRFLDSVGPVVENNIEKSGISAVEEFDPSSFSHPVLKAISKYRERYADPLIGFAGGPVTLLSYIISDGVDRDLFRVKRMMITEEKAYQAVMTRLTDMIIEFARMQISAGVDAFQIFDSWAGYLSPGEYEHFVKPYVYDILQELSGSIPTIYFSTMTSSYVADMDLPADFYSIDWRIDMKRFSAEIPDEKGIQGNLDPAIVNYDYALHEASKIVEAASGRDRYIFNTGHGLLPSTDPEKLKRLVEYVHSVNL</sequence>
<dbReference type="EC" id="4.1.1.37" evidence="1"/>
<dbReference type="EMBL" id="AL445063">
    <property type="protein sequence ID" value="CAC11455.1"/>
    <property type="molecule type" value="Genomic_DNA"/>
</dbReference>
<dbReference type="RefSeq" id="WP_010900739.1">
    <property type="nucleotide sequence ID" value="NC_002578.1"/>
</dbReference>
<dbReference type="SMR" id="Q9HLB9"/>
<dbReference type="STRING" id="273075.gene:9571527"/>
<dbReference type="PaxDb" id="273075-Ta0310"/>
<dbReference type="EnsemblBacteria" id="CAC11455">
    <property type="protein sequence ID" value="CAC11455"/>
    <property type="gene ID" value="CAC11455"/>
</dbReference>
<dbReference type="KEGG" id="tac:Ta0310"/>
<dbReference type="eggNOG" id="arCOG03323">
    <property type="taxonomic scope" value="Archaea"/>
</dbReference>
<dbReference type="HOGENOM" id="CLU_040933_0_1_2"/>
<dbReference type="InParanoid" id="Q9HLB9"/>
<dbReference type="OrthoDB" id="124836at2157"/>
<dbReference type="UniPathway" id="UPA00251">
    <property type="reaction ID" value="UER00321"/>
</dbReference>
<dbReference type="Proteomes" id="UP000001024">
    <property type="component" value="Chromosome"/>
</dbReference>
<dbReference type="GO" id="GO:0005829">
    <property type="term" value="C:cytosol"/>
    <property type="evidence" value="ECO:0007669"/>
    <property type="project" value="TreeGrafter"/>
</dbReference>
<dbReference type="GO" id="GO:0004853">
    <property type="term" value="F:uroporphyrinogen decarboxylase activity"/>
    <property type="evidence" value="ECO:0007669"/>
    <property type="project" value="UniProtKB-UniRule"/>
</dbReference>
<dbReference type="GO" id="GO:0006782">
    <property type="term" value="P:protoporphyrinogen IX biosynthetic process"/>
    <property type="evidence" value="ECO:0007669"/>
    <property type="project" value="UniProtKB-UniRule"/>
</dbReference>
<dbReference type="CDD" id="cd00717">
    <property type="entry name" value="URO-D"/>
    <property type="match status" value="1"/>
</dbReference>
<dbReference type="Gene3D" id="3.20.20.210">
    <property type="match status" value="1"/>
</dbReference>
<dbReference type="HAMAP" id="MF_00218">
    <property type="entry name" value="URO_D"/>
    <property type="match status" value="1"/>
</dbReference>
<dbReference type="InterPro" id="IPR038071">
    <property type="entry name" value="UROD/MetE-like_sf"/>
</dbReference>
<dbReference type="InterPro" id="IPR006361">
    <property type="entry name" value="Uroporphyrinogen_deCO2ase_HemE"/>
</dbReference>
<dbReference type="InterPro" id="IPR000257">
    <property type="entry name" value="Uroporphyrinogen_deCOase"/>
</dbReference>
<dbReference type="NCBIfam" id="TIGR01464">
    <property type="entry name" value="hemE"/>
    <property type="match status" value="1"/>
</dbReference>
<dbReference type="PANTHER" id="PTHR21091">
    <property type="entry name" value="METHYLTETRAHYDROFOLATE:HOMOCYSTEINE METHYLTRANSFERASE RELATED"/>
    <property type="match status" value="1"/>
</dbReference>
<dbReference type="PANTHER" id="PTHR21091:SF169">
    <property type="entry name" value="UROPORPHYRINOGEN DECARBOXYLASE"/>
    <property type="match status" value="1"/>
</dbReference>
<dbReference type="Pfam" id="PF01208">
    <property type="entry name" value="URO-D"/>
    <property type="match status" value="1"/>
</dbReference>
<dbReference type="SUPFAM" id="SSF51726">
    <property type="entry name" value="UROD/MetE-like"/>
    <property type="match status" value="1"/>
</dbReference>
<dbReference type="PROSITE" id="PS00906">
    <property type="entry name" value="UROD_1"/>
    <property type="match status" value="1"/>
</dbReference>
<dbReference type="PROSITE" id="PS00907">
    <property type="entry name" value="UROD_2"/>
    <property type="match status" value="1"/>
</dbReference>